<reference key="1">
    <citation type="submission" date="2006-03" db="EMBL/GenBank/DDBJ databases">
        <title>Complete sequence of chromosome of Psychrobacter cryohalolentis K5.</title>
        <authorList>
            <consortium name="US DOE Joint Genome Institute"/>
            <person name="Copeland A."/>
            <person name="Lucas S."/>
            <person name="Lapidus A."/>
            <person name="Barry K."/>
            <person name="Detter J.C."/>
            <person name="Glavina T."/>
            <person name="Hammon N."/>
            <person name="Israni S."/>
            <person name="Dalin E."/>
            <person name="Tice H."/>
            <person name="Pitluck S."/>
            <person name="Brettin T."/>
            <person name="Bruce D."/>
            <person name="Han C."/>
            <person name="Tapia R."/>
            <person name="Sims D.R."/>
            <person name="Gilna P."/>
            <person name="Schmutz J."/>
            <person name="Larimer F."/>
            <person name="Land M."/>
            <person name="Hauser L."/>
            <person name="Kyrpides N."/>
            <person name="Kim E."/>
            <person name="Richardson P."/>
        </authorList>
    </citation>
    <scope>NUCLEOTIDE SEQUENCE [LARGE SCALE GENOMIC DNA]</scope>
    <source>
        <strain>ATCC BAA-1226 / DSM 17306 / VKM B-2378 / K5</strain>
    </source>
</reference>
<organism>
    <name type="scientific">Psychrobacter cryohalolentis (strain ATCC BAA-1226 / DSM 17306 / VKM B-2378 / K5)</name>
    <dbReference type="NCBI Taxonomy" id="335284"/>
    <lineage>
        <taxon>Bacteria</taxon>
        <taxon>Pseudomonadati</taxon>
        <taxon>Pseudomonadota</taxon>
        <taxon>Gammaproteobacteria</taxon>
        <taxon>Moraxellales</taxon>
        <taxon>Moraxellaceae</taxon>
        <taxon>Psychrobacter</taxon>
    </lineage>
</organism>
<proteinExistence type="inferred from homology"/>
<dbReference type="EC" id="5.3.1.16" evidence="1"/>
<dbReference type="EMBL" id="CP000323">
    <property type="protein sequence ID" value="ABE76200.1"/>
    <property type="molecule type" value="Genomic_DNA"/>
</dbReference>
<dbReference type="RefSeq" id="WP_011514724.1">
    <property type="nucleotide sequence ID" value="NC_007969.1"/>
</dbReference>
<dbReference type="SMR" id="Q1Q803"/>
<dbReference type="STRING" id="335284.Pcryo_2423"/>
<dbReference type="KEGG" id="pcr:Pcryo_2423"/>
<dbReference type="eggNOG" id="COG0106">
    <property type="taxonomic scope" value="Bacteria"/>
</dbReference>
<dbReference type="HOGENOM" id="CLU_048577_1_1_6"/>
<dbReference type="UniPathway" id="UPA00031">
    <property type="reaction ID" value="UER00009"/>
</dbReference>
<dbReference type="Proteomes" id="UP000002425">
    <property type="component" value="Chromosome"/>
</dbReference>
<dbReference type="GO" id="GO:0005737">
    <property type="term" value="C:cytoplasm"/>
    <property type="evidence" value="ECO:0007669"/>
    <property type="project" value="UniProtKB-SubCell"/>
</dbReference>
<dbReference type="GO" id="GO:0003949">
    <property type="term" value="F:1-(5-phosphoribosyl)-5-[(5-phosphoribosylamino)methylideneamino]imidazole-4-carboxamide isomerase activity"/>
    <property type="evidence" value="ECO:0007669"/>
    <property type="project" value="UniProtKB-UniRule"/>
</dbReference>
<dbReference type="GO" id="GO:0000105">
    <property type="term" value="P:L-histidine biosynthetic process"/>
    <property type="evidence" value="ECO:0007669"/>
    <property type="project" value="UniProtKB-UniRule"/>
</dbReference>
<dbReference type="GO" id="GO:0000162">
    <property type="term" value="P:L-tryptophan biosynthetic process"/>
    <property type="evidence" value="ECO:0007669"/>
    <property type="project" value="TreeGrafter"/>
</dbReference>
<dbReference type="CDD" id="cd04732">
    <property type="entry name" value="HisA"/>
    <property type="match status" value="1"/>
</dbReference>
<dbReference type="FunFam" id="3.20.20.70:FF:000009">
    <property type="entry name" value="1-(5-phosphoribosyl)-5-[(5-phosphoribosylamino)methylideneamino] imidazole-4-carboxamide isomerase"/>
    <property type="match status" value="1"/>
</dbReference>
<dbReference type="Gene3D" id="3.20.20.70">
    <property type="entry name" value="Aldolase class I"/>
    <property type="match status" value="1"/>
</dbReference>
<dbReference type="HAMAP" id="MF_01014">
    <property type="entry name" value="HisA"/>
    <property type="match status" value="1"/>
</dbReference>
<dbReference type="InterPro" id="IPR013785">
    <property type="entry name" value="Aldolase_TIM"/>
</dbReference>
<dbReference type="InterPro" id="IPR006062">
    <property type="entry name" value="His_biosynth"/>
</dbReference>
<dbReference type="InterPro" id="IPR006063">
    <property type="entry name" value="HisA_bact_arch"/>
</dbReference>
<dbReference type="InterPro" id="IPR044524">
    <property type="entry name" value="Isoase_HisA-like"/>
</dbReference>
<dbReference type="InterPro" id="IPR023016">
    <property type="entry name" value="Isoase_HisA-like_bact"/>
</dbReference>
<dbReference type="InterPro" id="IPR011060">
    <property type="entry name" value="RibuloseP-bd_barrel"/>
</dbReference>
<dbReference type="NCBIfam" id="TIGR00007">
    <property type="entry name" value="1-(5-phosphoribosyl)-5-[(5-phosphoribosylamino)methylideneamino]imidazole-4-carboxamide isomerase"/>
    <property type="match status" value="1"/>
</dbReference>
<dbReference type="PANTHER" id="PTHR43090">
    <property type="entry name" value="1-(5-PHOSPHORIBOSYL)-5-[(5-PHOSPHORIBOSYLAMINO)METHYLIDENEAMINO] IMIDAZOLE-4-CARBOXAMIDE ISOMERASE"/>
    <property type="match status" value="1"/>
</dbReference>
<dbReference type="PANTHER" id="PTHR43090:SF2">
    <property type="entry name" value="1-(5-PHOSPHORIBOSYL)-5-[(5-PHOSPHORIBOSYLAMINO)METHYLIDENEAMINO] IMIDAZOLE-4-CARBOXAMIDE ISOMERASE"/>
    <property type="match status" value="1"/>
</dbReference>
<dbReference type="Pfam" id="PF00977">
    <property type="entry name" value="His_biosynth"/>
    <property type="match status" value="1"/>
</dbReference>
<dbReference type="SUPFAM" id="SSF51366">
    <property type="entry name" value="Ribulose-phoshate binding barrel"/>
    <property type="match status" value="1"/>
</dbReference>
<feature type="chain" id="PRO_0000290515" description="1-(5-phosphoribosyl)-5-[(5-phosphoribosylamino)methylideneamino] imidazole-4-carboxamide isomerase">
    <location>
        <begin position="1"/>
        <end position="246"/>
    </location>
</feature>
<feature type="active site" description="Proton acceptor" evidence="1">
    <location>
        <position position="12"/>
    </location>
</feature>
<feature type="active site" description="Proton donor" evidence="1">
    <location>
        <position position="134"/>
    </location>
</feature>
<comment type="catalytic activity">
    <reaction evidence="1">
        <text>1-(5-phospho-beta-D-ribosyl)-5-[(5-phospho-beta-D-ribosylamino)methylideneamino]imidazole-4-carboxamide = 5-[(5-phospho-1-deoxy-D-ribulos-1-ylimino)methylamino]-1-(5-phospho-beta-D-ribosyl)imidazole-4-carboxamide</text>
        <dbReference type="Rhea" id="RHEA:15469"/>
        <dbReference type="ChEBI" id="CHEBI:58435"/>
        <dbReference type="ChEBI" id="CHEBI:58525"/>
        <dbReference type="EC" id="5.3.1.16"/>
    </reaction>
</comment>
<comment type="pathway">
    <text evidence="1">Amino-acid biosynthesis; L-histidine biosynthesis; L-histidine from 5-phospho-alpha-D-ribose 1-diphosphate: step 4/9.</text>
</comment>
<comment type="subcellular location">
    <subcellularLocation>
        <location evidence="1">Cytoplasm</location>
    </subcellularLocation>
</comment>
<comment type="similarity">
    <text evidence="1">Belongs to the HisA/HisF family.</text>
</comment>
<sequence length="246" mass="26466">MCAVPVIIPAIDLKDGKCVRLKQGRMEDDTVFSDDPVAMAARWVKEGARRLHLVDLNGAFDGIPVHKQVVHDIAKAFPKLPIQLGGGVRNMQTIEQYITAGLTYIIIGTKAVEDPDFVAEACREFAGHIIVGIDAKDGMVATHGWANVTDTKATELAKRFADVGVSSIVYTDIARDGMMQGVNVEQTVNLAREGGLPVIASGGVTDMKDIELLKPYGDCIEGIITGRAIYEGTLDLGEAQLYLDGK</sequence>
<accession>Q1Q803</accession>
<evidence type="ECO:0000255" key="1">
    <source>
        <dbReference type="HAMAP-Rule" id="MF_01014"/>
    </source>
</evidence>
<gene>
    <name evidence="1" type="primary">hisA</name>
    <name type="ordered locus">Pcryo_2423</name>
</gene>
<name>HIS4_PSYCK</name>
<protein>
    <recommendedName>
        <fullName evidence="1">1-(5-phosphoribosyl)-5-[(5-phosphoribosylamino)methylideneamino] imidazole-4-carboxamide isomerase</fullName>
        <ecNumber evidence="1">5.3.1.16</ecNumber>
    </recommendedName>
    <alternativeName>
        <fullName evidence="1">Phosphoribosylformimino-5-aminoimidazole carboxamide ribotide isomerase</fullName>
    </alternativeName>
</protein>
<keyword id="KW-0028">Amino-acid biosynthesis</keyword>
<keyword id="KW-0963">Cytoplasm</keyword>
<keyword id="KW-0368">Histidine biosynthesis</keyword>
<keyword id="KW-0413">Isomerase</keyword>